<dbReference type="EMBL" id="AB370253">
    <property type="protein sequence ID" value="BAG72095.1"/>
    <property type="molecule type" value="Genomic_DNA"/>
</dbReference>
<dbReference type="EMBL" id="AB643572">
    <property type="protein sequence ID" value="BAL45569.1"/>
    <property type="molecule type" value="Genomic_DNA"/>
</dbReference>
<dbReference type="EMBL" id="EU428746">
    <property type="protein sequence ID" value="ACE79195.1"/>
    <property type="molecule type" value="mRNA"/>
</dbReference>
<dbReference type="EMBL" id="CM000853">
    <property type="protein sequence ID" value="KRG90417.1"/>
    <property type="molecule type" value="Genomic_DNA"/>
</dbReference>
<dbReference type="RefSeq" id="NP_001241532.1">
    <property type="nucleotide sequence ID" value="NM_001254603.3"/>
</dbReference>
<dbReference type="RefSeq" id="XP_006605349.1">
    <property type="nucleotide sequence ID" value="XM_006605286.2"/>
</dbReference>
<dbReference type="PDB" id="6TC7">
    <property type="method" value="X-ray"/>
    <property type="resolution" value="2.13 A"/>
    <property type="chains" value="AAA/BBB=51-402"/>
</dbReference>
<dbReference type="PDB" id="8R44">
    <property type="method" value="X-ray"/>
    <property type="resolution" value="1.58 A"/>
    <property type="chains" value="A/B=51-402"/>
</dbReference>
<dbReference type="PDB" id="8R45">
    <property type="method" value="X-ray"/>
    <property type="resolution" value="1.86 A"/>
    <property type="chains" value="A/B=51-402"/>
</dbReference>
<dbReference type="PDB" id="9ER4">
    <property type="method" value="X-ray"/>
    <property type="resolution" value="2.20 A"/>
    <property type="chains" value="A/B=51-402"/>
</dbReference>
<dbReference type="PDB" id="9F4I">
    <property type="method" value="X-ray"/>
    <property type="resolution" value="2.20 A"/>
    <property type="chains" value="A/B=51-402"/>
</dbReference>
<dbReference type="PDBsum" id="6TC7"/>
<dbReference type="PDBsum" id="8R44"/>
<dbReference type="PDBsum" id="8R45"/>
<dbReference type="PDBsum" id="9ER4"/>
<dbReference type="PDBsum" id="9F4I"/>
<dbReference type="SMR" id="B4YB07"/>
<dbReference type="FunCoup" id="B4YB07">
    <property type="interactions" value="236"/>
</dbReference>
<dbReference type="STRING" id="3847.B4YB07"/>
<dbReference type="PaxDb" id="3847-GLYMA20G22160.1"/>
<dbReference type="EnsemblPlants" id="KRG90417">
    <property type="protein sequence ID" value="KRG90417"/>
    <property type="gene ID" value="GLYMA_20G090000"/>
</dbReference>
<dbReference type="GeneID" id="100790763"/>
<dbReference type="Gramene" id="KRG90417">
    <property type="protein sequence ID" value="KRG90417"/>
    <property type="gene ID" value="GLYMA_20G090000"/>
</dbReference>
<dbReference type="KEGG" id="gmx:100790763"/>
<dbReference type="eggNOG" id="ENOG502QRSA">
    <property type="taxonomic scope" value="Eukaryota"/>
</dbReference>
<dbReference type="HOGENOM" id="CLU_010418_0_0_1"/>
<dbReference type="InParanoid" id="B4YB07"/>
<dbReference type="OrthoDB" id="2015534at2759"/>
<dbReference type="Proteomes" id="UP000008827">
    <property type="component" value="Chromosome 20"/>
</dbReference>
<dbReference type="ExpressionAtlas" id="B4YB07">
    <property type="expression patterns" value="baseline and differential"/>
</dbReference>
<dbReference type="GO" id="GO:0005634">
    <property type="term" value="C:nucleus"/>
    <property type="evidence" value="ECO:0000318"/>
    <property type="project" value="GO_Central"/>
</dbReference>
<dbReference type="GO" id="GO:0000155">
    <property type="term" value="F:phosphorelay sensor kinase activity"/>
    <property type="evidence" value="ECO:0007669"/>
    <property type="project" value="InterPro"/>
</dbReference>
<dbReference type="GO" id="GO:0009881">
    <property type="term" value="F:photoreceptor activity"/>
    <property type="evidence" value="ECO:0007669"/>
    <property type="project" value="UniProtKB-KW"/>
</dbReference>
<dbReference type="GO" id="GO:0042803">
    <property type="term" value="F:protein homodimerization activity"/>
    <property type="evidence" value="ECO:0007669"/>
    <property type="project" value="InterPro"/>
</dbReference>
<dbReference type="GO" id="GO:0009584">
    <property type="term" value="P:detection of visible light"/>
    <property type="evidence" value="ECO:0007669"/>
    <property type="project" value="InterPro"/>
</dbReference>
<dbReference type="GO" id="GO:0017009">
    <property type="term" value="P:protein-phycocyanobilin linkage"/>
    <property type="evidence" value="ECO:0000314"/>
    <property type="project" value="UniProtKB"/>
</dbReference>
<dbReference type="GO" id="GO:0009585">
    <property type="term" value="P:red, far-red light phototransduction"/>
    <property type="evidence" value="ECO:0007669"/>
    <property type="project" value="UniProtKB-KW"/>
</dbReference>
<dbReference type="GO" id="GO:0006355">
    <property type="term" value="P:regulation of DNA-templated transcription"/>
    <property type="evidence" value="ECO:0007669"/>
    <property type="project" value="InterPro"/>
</dbReference>
<dbReference type="CDD" id="cd00130">
    <property type="entry name" value="PAS"/>
    <property type="match status" value="2"/>
</dbReference>
<dbReference type="FunFam" id="3.30.450.20:FF:000039">
    <property type="entry name" value="Phytochrome"/>
    <property type="match status" value="1"/>
</dbReference>
<dbReference type="FunFam" id="3.30.450.270:FF:000001">
    <property type="entry name" value="Phytochrome"/>
    <property type="match status" value="1"/>
</dbReference>
<dbReference type="Gene3D" id="3.30.450.270">
    <property type="match status" value="1"/>
</dbReference>
<dbReference type="Gene3D" id="3.30.450.40">
    <property type="match status" value="1"/>
</dbReference>
<dbReference type="Gene3D" id="3.30.565.10">
    <property type="entry name" value="Histidine kinase-like ATPase, C-terminal domain"/>
    <property type="match status" value="1"/>
</dbReference>
<dbReference type="Gene3D" id="3.30.450.20">
    <property type="entry name" value="PAS domain"/>
    <property type="match status" value="3"/>
</dbReference>
<dbReference type="InterPro" id="IPR003018">
    <property type="entry name" value="GAF"/>
</dbReference>
<dbReference type="InterPro" id="IPR029016">
    <property type="entry name" value="GAF-like_dom_sf"/>
</dbReference>
<dbReference type="InterPro" id="IPR036890">
    <property type="entry name" value="HATPase_C_sf"/>
</dbReference>
<dbReference type="InterPro" id="IPR005467">
    <property type="entry name" value="His_kinase_dom"/>
</dbReference>
<dbReference type="InterPro" id="IPR003661">
    <property type="entry name" value="HisK_dim/P_dom"/>
</dbReference>
<dbReference type="InterPro" id="IPR000014">
    <property type="entry name" value="PAS"/>
</dbReference>
<dbReference type="InterPro" id="IPR000700">
    <property type="entry name" value="PAS-assoc_C"/>
</dbReference>
<dbReference type="InterPro" id="IPR035965">
    <property type="entry name" value="PAS-like_dom_sf"/>
</dbReference>
<dbReference type="InterPro" id="IPR013654">
    <property type="entry name" value="PAS_2"/>
</dbReference>
<dbReference type="InterPro" id="IPR013767">
    <property type="entry name" value="PAS_fold"/>
</dbReference>
<dbReference type="InterPro" id="IPR016132">
    <property type="entry name" value="Phyto_chromo_attachment"/>
</dbReference>
<dbReference type="InterPro" id="IPR013516">
    <property type="entry name" value="Phyto_chromo_BS"/>
</dbReference>
<dbReference type="InterPro" id="IPR001294">
    <property type="entry name" value="Phytochrome"/>
</dbReference>
<dbReference type="InterPro" id="IPR012129">
    <property type="entry name" value="Phytochrome_A-E"/>
</dbReference>
<dbReference type="InterPro" id="IPR013515">
    <property type="entry name" value="Phytochrome_cen-reg"/>
</dbReference>
<dbReference type="InterPro" id="IPR043150">
    <property type="entry name" value="Phytochrome_PHY_sf"/>
</dbReference>
<dbReference type="NCBIfam" id="TIGR00229">
    <property type="entry name" value="sensory_box"/>
    <property type="match status" value="1"/>
</dbReference>
<dbReference type="PANTHER" id="PTHR47876">
    <property type="entry name" value="OS08G0260000 PROTEIN"/>
    <property type="match status" value="1"/>
</dbReference>
<dbReference type="PANTHER" id="PTHR47876:SF3">
    <property type="entry name" value="PHYTOCHROME 1"/>
    <property type="match status" value="1"/>
</dbReference>
<dbReference type="Pfam" id="PF01590">
    <property type="entry name" value="GAF"/>
    <property type="match status" value="1"/>
</dbReference>
<dbReference type="Pfam" id="PF02518">
    <property type="entry name" value="HATPase_c"/>
    <property type="match status" value="1"/>
</dbReference>
<dbReference type="Pfam" id="PF00512">
    <property type="entry name" value="HisKA"/>
    <property type="match status" value="1"/>
</dbReference>
<dbReference type="Pfam" id="PF00989">
    <property type="entry name" value="PAS"/>
    <property type="match status" value="2"/>
</dbReference>
<dbReference type="Pfam" id="PF08446">
    <property type="entry name" value="PAS_2"/>
    <property type="match status" value="1"/>
</dbReference>
<dbReference type="Pfam" id="PF00360">
    <property type="entry name" value="PHY"/>
    <property type="match status" value="1"/>
</dbReference>
<dbReference type="PIRSF" id="PIRSF000084">
    <property type="entry name" value="Phytochrome"/>
    <property type="match status" value="1"/>
</dbReference>
<dbReference type="PRINTS" id="PR01033">
    <property type="entry name" value="PHYTOCHROME"/>
</dbReference>
<dbReference type="SMART" id="SM00065">
    <property type="entry name" value="GAF"/>
    <property type="match status" value="1"/>
</dbReference>
<dbReference type="SMART" id="SM00387">
    <property type="entry name" value="HATPase_c"/>
    <property type="match status" value="1"/>
</dbReference>
<dbReference type="SMART" id="SM00388">
    <property type="entry name" value="HisKA"/>
    <property type="match status" value="1"/>
</dbReference>
<dbReference type="SMART" id="SM00091">
    <property type="entry name" value="PAS"/>
    <property type="match status" value="2"/>
</dbReference>
<dbReference type="SUPFAM" id="SSF55874">
    <property type="entry name" value="ATPase domain of HSP90 chaperone/DNA topoisomerase II/histidine kinase"/>
    <property type="match status" value="1"/>
</dbReference>
<dbReference type="SUPFAM" id="SSF55781">
    <property type="entry name" value="GAF domain-like"/>
    <property type="match status" value="2"/>
</dbReference>
<dbReference type="SUPFAM" id="SSF55785">
    <property type="entry name" value="PYP-like sensor domain (PAS domain)"/>
    <property type="match status" value="3"/>
</dbReference>
<dbReference type="PROSITE" id="PS50109">
    <property type="entry name" value="HIS_KIN"/>
    <property type="match status" value="1"/>
</dbReference>
<dbReference type="PROSITE" id="PS50113">
    <property type="entry name" value="PAC"/>
    <property type="match status" value="1"/>
</dbReference>
<dbReference type="PROSITE" id="PS50112">
    <property type="entry name" value="PAS"/>
    <property type="match status" value="2"/>
</dbReference>
<dbReference type="PROSITE" id="PS00245">
    <property type="entry name" value="PHYTOCHROME_1"/>
    <property type="match status" value="1"/>
</dbReference>
<dbReference type="PROSITE" id="PS50046">
    <property type="entry name" value="PHYTOCHROME_2"/>
    <property type="match status" value="1"/>
</dbReference>
<gene>
    <name evidence="7" type="primary">PHYA2</name>
    <name evidence="10" type="ORF">GLYMA_20G090000</name>
</gene>
<comment type="function">
    <text evidence="1">Regulatory photoreceptor which exists in two forms that are reversibly interconvertible by light: the Pr form that absorbs maximally in the red region of the spectrum and the Pfr form that absorbs maximally in the far-red region. Photoconversion of Pr to Pfr induces an array of morphogenic responses, whereas reconversion of Pfr to Pr cancels the induction of those responses. Pfr controls the expression of a number of nuclear genes including those encoding the small subunit of ribulose-bisphosphate carboxylase, chlorophyll A/B binding protein, protochlorophyllide reductase, rRNA, etc. It also controls the expression of its own gene(s) in a negative feedback fashion.</text>
</comment>
<comment type="subunit">
    <text evidence="6">Heterodimer between subunit A and subunit B.</text>
</comment>
<comment type="PTM">
    <text evidence="9">Contains one covalently linked phytochromobilin chromophore.</text>
</comment>
<comment type="similarity">
    <text evidence="8">Belongs to the phytochrome family.</text>
</comment>
<keyword id="KW-0002">3D-structure</keyword>
<keyword id="KW-0157">Chromophore</keyword>
<keyword id="KW-0600">Photoreceptor protein</keyword>
<keyword id="KW-0607">Phytochrome signaling pathway</keyword>
<keyword id="KW-0675">Receptor</keyword>
<keyword id="KW-1185">Reference proteome</keyword>
<keyword id="KW-0677">Repeat</keyword>
<keyword id="KW-0716">Sensory transduction</keyword>
<keyword id="KW-0804">Transcription</keyword>
<keyword id="KW-0805">Transcription regulation</keyword>
<accession>B4YB07</accession>
<evidence type="ECO:0000250" key="1">
    <source>
        <dbReference type="UniProtKB" id="P14713"/>
    </source>
</evidence>
<evidence type="ECO:0000255" key="2">
    <source>
        <dbReference type="PROSITE-ProRule" id="PRU00107"/>
    </source>
</evidence>
<evidence type="ECO:0000255" key="3">
    <source>
        <dbReference type="PROSITE-ProRule" id="PRU00140"/>
    </source>
</evidence>
<evidence type="ECO:0000255" key="4">
    <source>
        <dbReference type="PROSITE-ProRule" id="PRU00141"/>
    </source>
</evidence>
<evidence type="ECO:0000256" key="5">
    <source>
        <dbReference type="SAM" id="MobiDB-lite"/>
    </source>
</evidence>
<evidence type="ECO:0000269" key="6">
    <source>
    </source>
</evidence>
<evidence type="ECO:0000303" key="7">
    <source>
    </source>
</evidence>
<evidence type="ECO:0000305" key="8"/>
<evidence type="ECO:0000305" key="9">
    <source>
    </source>
</evidence>
<evidence type="ECO:0000312" key="10">
    <source>
        <dbReference type="EMBL" id="KRG90417.1"/>
    </source>
</evidence>
<protein>
    <recommendedName>
        <fullName evidence="8">Phytochrome A-2</fullName>
        <shortName evidence="7">GmphyA2</shortName>
    </recommendedName>
</protein>
<feature type="chain" id="PRO_0000451873" description="Phytochrome A-2">
    <location>
        <begin position="1"/>
        <end position="1123"/>
    </location>
</feature>
<feature type="domain" description="GAF" evidence="8">
    <location>
        <begin position="267"/>
        <end position="449"/>
    </location>
</feature>
<feature type="domain" description="PAS 1" evidence="3">
    <location>
        <begin position="616"/>
        <end position="686"/>
    </location>
</feature>
<feature type="domain" description="PAC" evidence="4">
    <location>
        <begin position="689"/>
        <end position="745"/>
    </location>
</feature>
<feature type="domain" description="PAS 2" evidence="3">
    <location>
        <begin position="749"/>
        <end position="823"/>
    </location>
</feature>
<feature type="domain" description="Histidine kinase" evidence="2">
    <location>
        <begin position="900"/>
        <end position="1119"/>
    </location>
</feature>
<feature type="region of interest" description="Disordered" evidence="5">
    <location>
        <begin position="1"/>
        <end position="21"/>
    </location>
</feature>
<feature type="compositionally biased region" description="Low complexity" evidence="5">
    <location>
        <begin position="1"/>
        <end position="14"/>
    </location>
</feature>
<feature type="binding site" description="covalent" evidence="9">
    <location>
        <position position="323"/>
    </location>
    <ligand>
        <name>phytochromobilin</name>
        <dbReference type="ChEBI" id="CHEBI:189064"/>
    </ligand>
</feature>
<reference key="1">
    <citation type="journal article" date="2008" name="Genetics">
        <title>Genetic redundancy in soybean photoresponses associated with duplication of the phytochrome A gene.</title>
        <authorList>
            <person name="Liu B."/>
            <person name="Kanazawa A."/>
            <person name="Matsumura H."/>
            <person name="Takahashi R."/>
            <person name="Harada K."/>
            <person name="Abe J."/>
        </authorList>
    </citation>
    <scope>NUCLEOTIDE SEQUENCE [GENOMIC DNA]</scope>
</reference>
<reference key="2">
    <citation type="submission" date="2011-06" db="EMBL/GenBank/DDBJ databases">
        <title>Genetic variation in the soybean maturity locus E4 involved in adaptation to high latitudes.</title>
        <authorList>
            <person name="Tsubokura Y."/>
            <person name="Matsumura H."/>
            <person name="Liu B."/>
            <person name="Nakashima H."/>
            <person name="Anai T."/>
            <person name="Xu M."/>
            <person name="Kong F."/>
            <person name="Kanamori H."/>
            <person name="Katayose Y."/>
            <person name="Takahashi R."/>
            <person name="Harada K."/>
            <person name="Abe J."/>
        </authorList>
    </citation>
    <scope>NUCLEOTIDE SEQUENCE [GENOMIC DNA]</scope>
</reference>
<reference key="3">
    <citation type="submission" date="2012-01" db="EMBL/GenBank/DDBJ databases">
        <authorList>
            <person name="Wu F."/>
            <person name="Lin C."/>
            <person name="Fu Y."/>
        </authorList>
    </citation>
    <scope>NUCLEOTIDE SEQUENCE [MRNA]</scope>
</reference>
<reference key="4">
    <citation type="journal article" date="2010" name="Nature">
        <title>Genome sequence of the palaeopolyploid soybean.</title>
        <authorList>
            <person name="Schmutz J."/>
            <person name="Cannon S.B."/>
            <person name="Schlueter J."/>
            <person name="Ma J."/>
            <person name="Mitros T."/>
            <person name="Nelson W."/>
            <person name="Hyten D.L."/>
            <person name="Song Q."/>
            <person name="Thelen J.J."/>
            <person name="Cheng J."/>
            <person name="Xu D."/>
            <person name="Hellsten U."/>
            <person name="May G.D."/>
            <person name="Yu Y."/>
            <person name="Sakurai T."/>
            <person name="Umezawa T."/>
            <person name="Bhattacharyya M.K."/>
            <person name="Sandhu D."/>
            <person name="Valliyodan B."/>
            <person name="Lindquist E."/>
            <person name="Peto M."/>
            <person name="Grant D."/>
            <person name="Shu S."/>
            <person name="Goodstein D."/>
            <person name="Barry K."/>
            <person name="Futrell-Griggs M."/>
            <person name="Abernathy B."/>
            <person name="Du J."/>
            <person name="Tian Z."/>
            <person name="Zhu L."/>
            <person name="Gill N."/>
            <person name="Joshi T."/>
            <person name="Libault M."/>
            <person name="Sethuraman A."/>
            <person name="Zhang X.-C."/>
            <person name="Shinozaki K."/>
            <person name="Nguyen H.T."/>
            <person name="Wing R.A."/>
            <person name="Cregan P."/>
            <person name="Specht J."/>
            <person name="Grimwood J."/>
            <person name="Rokhsar D."/>
            <person name="Stacey G."/>
            <person name="Shoemaker R.C."/>
            <person name="Jackson S.A."/>
        </authorList>
    </citation>
    <scope>NUCLEOTIDE SEQUENCE [LARGE SCALE GENOMIC DNA]</scope>
    <source>
        <strain>cv. Williams 82</strain>
    </source>
</reference>
<reference key="5">
    <citation type="journal article" date="2020" name="Nat. Plants">
        <title>Structural insights into photoactivation and signalling in plant phytochromes.</title>
        <authorList>
            <person name="Nagano S."/>
            <person name="Guan K."/>
            <person name="Shenkutie S.M."/>
            <person name="Feiler C."/>
            <person name="Weiss M."/>
            <person name="Kraskov A."/>
            <person name="Buhrke D."/>
            <person name="Hildebrandt P."/>
            <person name="Hughes J."/>
        </authorList>
    </citation>
    <scope>X-RAY CRYSTALLOGRAPHY (2.13 ANGSTROMS) OF 51-402 IN COMPLEX WITH PHYCOCYANOBILIN</scope>
    <scope>SUBUNIT</scope>
</reference>
<sequence>MSTSRPSQSSSNSGRSRRSARAMALATVDAKLHATFEESGSSFDYSSSVRISGTADGVNQPRHDKVTTAYLHHMQKGKMIQPFGCLLALDEKTCKVIAYSENAPEMLTMVSHAVPSVGDHPALGIGTDIKTLFTAPSASALQKALGFAEVLLLNPVLIHCKTSGKPFYAIIHRVTGSMIIDFEPVKPYEVPMTAAGALQSYKLAAKAITRLQSLPSGSMERLCDTMVQEVFELTGYDRVMAYKFHEDDHGEVIAEITKPGLEPYLGLHYPATDIPQASRFLFMKNKVRMIVDCHAKHVRVLQDEKLPFDLTLCGSTLRAPHSCHAQYMANMDSIASLVMAVVVNDNEEDGDTDAIQPQKRKRLWGLVVCHNTTPRFVPFPLRYACEFLAQVFAIHVNKEIELEYQIIEKNILRTQTLLCDLVMRDAPLGIVSESPNIMDLVKCDGAALIYKNKVWRLGVTPSESQIREIAFWLSEYHMDSTGFSTDSLSDAGFPSALSLGDVVCGMAAVRVTAKDVVFWFRSHTAAEIRWGGAKHEAGEKDDGRRMHPRSSFKVFLDVVKARSLPWKEYEIDAMHSLQLILRNAFKDTESMDLNTKAINTRLSDLKIEGMQELEAVTSEIVRLIETATVPILAVDVDGLVNGWNIKIAELTGLPVGEAMGKHLLTLVEDSSTDRVKKMLNLALLGEEEKNVQFEIKTHGSKMDSGPISLVVNACASRDLRDNVVGVCFVAHDITAQKNVMDKFTRIEGDYKAIVQNRNPLIPPIFGTDEFGWCCEWNPAMTKLTGWKREEVMDKMLLGELFGTHMAACRLKNQEAFVNLGVVLNKAMTGLETEKVPFGFFARNGKYVECLLSVSKKLDVEGLVTGVFCFLQLASPELQQALHIQRLSEQTALKRLNALSYMKRQIRNPLCGIIFSRKMLEGTALGTEQKQLLRTSAQCQQQLSKILDDSDLDSIIDGYLDLEMAEFTLHEVLVTSLSQVMTKSNGKSIRIVNDVAEQIVMETLYGDSLRLQQVLADFLLISINFTPNGGQVVVAGTLTKEQLGKSVHLVKLELSITHGGSGVPEALLNQMFGNNGLESEEGISLLISRKLLKLMNGDVRYLREAGKSAFILSAELAAAHNLKG</sequence>
<organism>
    <name type="scientific">Glycine max</name>
    <name type="common">Soybean</name>
    <name type="synonym">Glycine hispida</name>
    <dbReference type="NCBI Taxonomy" id="3847"/>
    <lineage>
        <taxon>Eukaryota</taxon>
        <taxon>Viridiplantae</taxon>
        <taxon>Streptophyta</taxon>
        <taxon>Embryophyta</taxon>
        <taxon>Tracheophyta</taxon>
        <taxon>Spermatophyta</taxon>
        <taxon>Magnoliopsida</taxon>
        <taxon>eudicotyledons</taxon>
        <taxon>Gunneridae</taxon>
        <taxon>Pentapetalae</taxon>
        <taxon>rosids</taxon>
        <taxon>fabids</taxon>
        <taxon>Fabales</taxon>
        <taxon>Fabaceae</taxon>
        <taxon>Papilionoideae</taxon>
        <taxon>50 kb inversion clade</taxon>
        <taxon>NPAAA clade</taxon>
        <taxon>indigoferoid/millettioid clade</taxon>
        <taxon>Phaseoleae</taxon>
        <taxon>Glycine</taxon>
        <taxon>Glycine subgen. Soja</taxon>
    </lineage>
</organism>
<name>PHYA2_SOYBN</name>
<proteinExistence type="evidence at protein level"/>